<gene>
    <name evidence="1" type="primary">ndk</name>
    <name type="ordered locus">CFF8240_0233</name>
</gene>
<evidence type="ECO:0000255" key="1">
    <source>
        <dbReference type="HAMAP-Rule" id="MF_00451"/>
    </source>
</evidence>
<dbReference type="EC" id="2.7.4.6" evidence="1"/>
<dbReference type="EMBL" id="CP000487">
    <property type="protein sequence ID" value="ABK81831.1"/>
    <property type="molecule type" value="Genomic_DNA"/>
</dbReference>
<dbReference type="RefSeq" id="WP_002848288.1">
    <property type="nucleotide sequence ID" value="NC_008599.1"/>
</dbReference>
<dbReference type="SMR" id="A0RMK4"/>
<dbReference type="GeneID" id="61064077"/>
<dbReference type="KEGG" id="cff:CFF8240_0233"/>
<dbReference type="eggNOG" id="COG0105">
    <property type="taxonomic scope" value="Bacteria"/>
</dbReference>
<dbReference type="HOGENOM" id="CLU_060216_8_1_7"/>
<dbReference type="Proteomes" id="UP000000760">
    <property type="component" value="Chromosome"/>
</dbReference>
<dbReference type="GO" id="GO:0005737">
    <property type="term" value="C:cytoplasm"/>
    <property type="evidence" value="ECO:0007669"/>
    <property type="project" value="UniProtKB-SubCell"/>
</dbReference>
<dbReference type="GO" id="GO:0005524">
    <property type="term" value="F:ATP binding"/>
    <property type="evidence" value="ECO:0007669"/>
    <property type="project" value="UniProtKB-UniRule"/>
</dbReference>
<dbReference type="GO" id="GO:0046872">
    <property type="term" value="F:metal ion binding"/>
    <property type="evidence" value="ECO:0007669"/>
    <property type="project" value="UniProtKB-KW"/>
</dbReference>
<dbReference type="GO" id="GO:0004550">
    <property type="term" value="F:nucleoside diphosphate kinase activity"/>
    <property type="evidence" value="ECO:0007669"/>
    <property type="project" value="UniProtKB-UniRule"/>
</dbReference>
<dbReference type="GO" id="GO:0006241">
    <property type="term" value="P:CTP biosynthetic process"/>
    <property type="evidence" value="ECO:0007669"/>
    <property type="project" value="UniProtKB-UniRule"/>
</dbReference>
<dbReference type="GO" id="GO:0006183">
    <property type="term" value="P:GTP biosynthetic process"/>
    <property type="evidence" value="ECO:0007669"/>
    <property type="project" value="UniProtKB-UniRule"/>
</dbReference>
<dbReference type="GO" id="GO:0006228">
    <property type="term" value="P:UTP biosynthetic process"/>
    <property type="evidence" value="ECO:0007669"/>
    <property type="project" value="UniProtKB-UniRule"/>
</dbReference>
<dbReference type="CDD" id="cd04413">
    <property type="entry name" value="NDPk_I"/>
    <property type="match status" value="1"/>
</dbReference>
<dbReference type="FunFam" id="3.30.70.141:FF:000001">
    <property type="entry name" value="Nucleoside diphosphate kinase"/>
    <property type="match status" value="1"/>
</dbReference>
<dbReference type="Gene3D" id="3.30.70.141">
    <property type="entry name" value="Nucleoside diphosphate kinase-like domain"/>
    <property type="match status" value="1"/>
</dbReference>
<dbReference type="HAMAP" id="MF_00451">
    <property type="entry name" value="NDP_kinase"/>
    <property type="match status" value="1"/>
</dbReference>
<dbReference type="InterPro" id="IPR034907">
    <property type="entry name" value="NDK-like_dom"/>
</dbReference>
<dbReference type="InterPro" id="IPR036850">
    <property type="entry name" value="NDK-like_dom_sf"/>
</dbReference>
<dbReference type="InterPro" id="IPR001564">
    <property type="entry name" value="Nucleoside_diP_kinase"/>
</dbReference>
<dbReference type="InterPro" id="IPR023005">
    <property type="entry name" value="Nucleoside_diP_kinase_AS"/>
</dbReference>
<dbReference type="NCBIfam" id="NF001908">
    <property type="entry name" value="PRK00668.1"/>
    <property type="match status" value="1"/>
</dbReference>
<dbReference type="PANTHER" id="PTHR11349">
    <property type="entry name" value="NUCLEOSIDE DIPHOSPHATE KINASE"/>
    <property type="match status" value="1"/>
</dbReference>
<dbReference type="Pfam" id="PF00334">
    <property type="entry name" value="NDK"/>
    <property type="match status" value="1"/>
</dbReference>
<dbReference type="PRINTS" id="PR01243">
    <property type="entry name" value="NUCDPKINASE"/>
</dbReference>
<dbReference type="SMART" id="SM00562">
    <property type="entry name" value="NDK"/>
    <property type="match status" value="1"/>
</dbReference>
<dbReference type="SUPFAM" id="SSF54919">
    <property type="entry name" value="Nucleoside diphosphate kinase, NDK"/>
    <property type="match status" value="1"/>
</dbReference>
<dbReference type="PROSITE" id="PS00469">
    <property type="entry name" value="NDPK"/>
    <property type="match status" value="1"/>
</dbReference>
<dbReference type="PROSITE" id="PS51374">
    <property type="entry name" value="NDPK_LIKE"/>
    <property type="match status" value="1"/>
</dbReference>
<comment type="function">
    <text evidence="1">Major role in the synthesis of nucleoside triphosphates other than ATP. The ATP gamma phosphate is transferred to the NDP beta phosphate via a ping-pong mechanism, using a phosphorylated active-site intermediate.</text>
</comment>
<comment type="catalytic activity">
    <reaction evidence="1">
        <text>a 2'-deoxyribonucleoside 5'-diphosphate + ATP = a 2'-deoxyribonucleoside 5'-triphosphate + ADP</text>
        <dbReference type="Rhea" id="RHEA:44640"/>
        <dbReference type="ChEBI" id="CHEBI:30616"/>
        <dbReference type="ChEBI" id="CHEBI:61560"/>
        <dbReference type="ChEBI" id="CHEBI:73316"/>
        <dbReference type="ChEBI" id="CHEBI:456216"/>
        <dbReference type="EC" id="2.7.4.6"/>
    </reaction>
</comment>
<comment type="catalytic activity">
    <reaction evidence="1">
        <text>a ribonucleoside 5'-diphosphate + ATP = a ribonucleoside 5'-triphosphate + ADP</text>
        <dbReference type="Rhea" id="RHEA:18113"/>
        <dbReference type="ChEBI" id="CHEBI:30616"/>
        <dbReference type="ChEBI" id="CHEBI:57930"/>
        <dbReference type="ChEBI" id="CHEBI:61557"/>
        <dbReference type="ChEBI" id="CHEBI:456216"/>
        <dbReference type="EC" id="2.7.4.6"/>
    </reaction>
</comment>
<comment type="cofactor">
    <cofactor evidence="1">
        <name>Mg(2+)</name>
        <dbReference type="ChEBI" id="CHEBI:18420"/>
    </cofactor>
</comment>
<comment type="subunit">
    <text evidence="1">Homotetramer.</text>
</comment>
<comment type="subcellular location">
    <subcellularLocation>
        <location evidence="1">Cytoplasm</location>
    </subcellularLocation>
</comment>
<comment type="similarity">
    <text evidence="1">Belongs to the NDK family.</text>
</comment>
<protein>
    <recommendedName>
        <fullName evidence="1">Nucleoside diphosphate kinase</fullName>
        <shortName evidence="1">NDK</shortName>
        <shortName evidence="1">NDP kinase</shortName>
        <ecNumber evidence="1">2.7.4.6</ecNumber>
    </recommendedName>
    <alternativeName>
        <fullName evidence="1">Nucleoside-2-P kinase</fullName>
    </alternativeName>
</protein>
<sequence length="137" mass="14904">MEQTLSIIKPDAVKKGVVGKIIDRFESNGLRIAAAKKLQLSVEDAKKFYEVHAARPFYGELVEFMTSGPVVVMVLEGDNAVVKNRELMGATNPKEAAAGTIRADFAESIDANAVHGSDSLENAKTEIAFFFAKREIC</sequence>
<proteinExistence type="inferred from homology"/>
<organism>
    <name type="scientific">Campylobacter fetus subsp. fetus (strain 82-40)</name>
    <dbReference type="NCBI Taxonomy" id="360106"/>
    <lineage>
        <taxon>Bacteria</taxon>
        <taxon>Pseudomonadati</taxon>
        <taxon>Campylobacterota</taxon>
        <taxon>Epsilonproteobacteria</taxon>
        <taxon>Campylobacterales</taxon>
        <taxon>Campylobacteraceae</taxon>
        <taxon>Campylobacter</taxon>
    </lineage>
</organism>
<accession>A0RMK4</accession>
<feature type="chain" id="PRO_1000026222" description="Nucleoside diphosphate kinase">
    <location>
        <begin position="1"/>
        <end position="137"/>
    </location>
</feature>
<feature type="active site" description="Pros-phosphohistidine intermediate" evidence="1">
    <location>
        <position position="115"/>
    </location>
</feature>
<feature type="binding site" evidence="1">
    <location>
        <position position="9"/>
    </location>
    <ligand>
        <name>ATP</name>
        <dbReference type="ChEBI" id="CHEBI:30616"/>
    </ligand>
</feature>
<feature type="binding site" evidence="1">
    <location>
        <position position="57"/>
    </location>
    <ligand>
        <name>ATP</name>
        <dbReference type="ChEBI" id="CHEBI:30616"/>
    </ligand>
</feature>
<feature type="binding site" evidence="1">
    <location>
        <position position="85"/>
    </location>
    <ligand>
        <name>ATP</name>
        <dbReference type="ChEBI" id="CHEBI:30616"/>
    </ligand>
</feature>
<feature type="binding site" evidence="1">
    <location>
        <position position="91"/>
    </location>
    <ligand>
        <name>ATP</name>
        <dbReference type="ChEBI" id="CHEBI:30616"/>
    </ligand>
</feature>
<feature type="binding site" evidence="1">
    <location>
        <position position="102"/>
    </location>
    <ligand>
        <name>ATP</name>
        <dbReference type="ChEBI" id="CHEBI:30616"/>
    </ligand>
</feature>
<feature type="binding site" evidence="1">
    <location>
        <position position="112"/>
    </location>
    <ligand>
        <name>ATP</name>
        <dbReference type="ChEBI" id="CHEBI:30616"/>
    </ligand>
</feature>
<reference key="1">
    <citation type="submission" date="2006-11" db="EMBL/GenBank/DDBJ databases">
        <title>Sequence of Campylobacter fetus subsp. fetus 82-40.</title>
        <authorList>
            <person name="Fouts D.E."/>
            <person name="Nelson K.E."/>
        </authorList>
    </citation>
    <scope>NUCLEOTIDE SEQUENCE [LARGE SCALE GENOMIC DNA]</scope>
    <source>
        <strain>82-40</strain>
    </source>
</reference>
<name>NDK_CAMFF</name>
<keyword id="KW-0067">ATP-binding</keyword>
<keyword id="KW-0963">Cytoplasm</keyword>
<keyword id="KW-0418">Kinase</keyword>
<keyword id="KW-0460">Magnesium</keyword>
<keyword id="KW-0479">Metal-binding</keyword>
<keyword id="KW-0546">Nucleotide metabolism</keyword>
<keyword id="KW-0547">Nucleotide-binding</keyword>
<keyword id="KW-0597">Phosphoprotein</keyword>
<keyword id="KW-0808">Transferase</keyword>